<feature type="chain" id="PRO_0000342973" description="Probable calcium-binding protein CML50">
    <location>
        <begin position="1"/>
        <end position="354"/>
    </location>
</feature>
<feature type="domain" description="EF-hand 1" evidence="2">
    <location>
        <begin position="183"/>
        <end position="218"/>
    </location>
</feature>
<feature type="domain" description="EF-hand 2" evidence="2">
    <location>
        <begin position="249"/>
        <end position="284"/>
    </location>
</feature>
<feature type="region of interest" description="Disordered" evidence="3">
    <location>
        <begin position="1"/>
        <end position="159"/>
    </location>
</feature>
<feature type="compositionally biased region" description="Low complexity" evidence="3">
    <location>
        <begin position="1"/>
        <end position="10"/>
    </location>
</feature>
<feature type="compositionally biased region" description="Low complexity" evidence="3">
    <location>
        <begin position="28"/>
        <end position="71"/>
    </location>
</feature>
<feature type="compositionally biased region" description="Pro residues" evidence="3">
    <location>
        <begin position="72"/>
        <end position="81"/>
    </location>
</feature>
<feature type="compositionally biased region" description="Low complexity" evidence="3">
    <location>
        <begin position="106"/>
        <end position="117"/>
    </location>
</feature>
<feature type="binding site" evidence="2">
    <location>
        <position position="196"/>
    </location>
    <ligand>
        <name>Ca(2+)</name>
        <dbReference type="ChEBI" id="CHEBI:29108"/>
        <label>1</label>
    </ligand>
</feature>
<feature type="binding site" evidence="2">
    <location>
        <position position="198"/>
    </location>
    <ligand>
        <name>Ca(2+)</name>
        <dbReference type="ChEBI" id="CHEBI:29108"/>
        <label>1</label>
    </ligand>
</feature>
<feature type="binding site" evidence="2">
    <location>
        <position position="200"/>
    </location>
    <ligand>
        <name>Ca(2+)</name>
        <dbReference type="ChEBI" id="CHEBI:29108"/>
        <label>1</label>
    </ligand>
</feature>
<feature type="binding site" evidence="2">
    <location>
        <position position="207"/>
    </location>
    <ligand>
        <name>Ca(2+)</name>
        <dbReference type="ChEBI" id="CHEBI:29108"/>
        <label>1</label>
    </ligand>
</feature>
<feature type="binding site" evidence="2">
    <location>
        <position position="262"/>
    </location>
    <ligand>
        <name>Ca(2+)</name>
        <dbReference type="ChEBI" id="CHEBI:29108"/>
        <label>2</label>
    </ligand>
</feature>
<feature type="binding site" evidence="2">
    <location>
        <position position="264"/>
    </location>
    <ligand>
        <name>Ca(2+)</name>
        <dbReference type="ChEBI" id="CHEBI:29108"/>
        <label>2</label>
    </ligand>
</feature>
<feature type="binding site" evidence="2">
    <location>
        <position position="266"/>
    </location>
    <ligand>
        <name>Ca(2+)</name>
        <dbReference type="ChEBI" id="CHEBI:29108"/>
        <label>2</label>
    </ligand>
</feature>
<feature type="binding site" evidence="2">
    <location>
        <position position="268"/>
    </location>
    <ligand>
        <name>Ca(2+)</name>
        <dbReference type="ChEBI" id="CHEBI:29108"/>
        <label>2</label>
    </ligand>
</feature>
<feature type="binding site" evidence="2">
    <location>
        <position position="273"/>
    </location>
    <ligand>
        <name>Ca(2+)</name>
        <dbReference type="ChEBI" id="CHEBI:29108"/>
        <label>2</label>
    </ligand>
</feature>
<accession>Q9FYE4</accession>
<comment type="function">
    <text evidence="1">Potential calcium sensor.</text>
</comment>
<comment type="caution">
    <text evidence="4">Although assigned as a calmodulin family member by Ref.4, it only contains EF-hand domains.</text>
</comment>
<dbReference type="EMBL" id="AL391716">
    <property type="protein sequence ID" value="CAC05499.1"/>
    <property type="molecule type" value="Genomic_DNA"/>
</dbReference>
<dbReference type="EMBL" id="CP002688">
    <property type="protein sequence ID" value="AED90707.1"/>
    <property type="molecule type" value="Genomic_DNA"/>
</dbReference>
<dbReference type="EMBL" id="AY081342">
    <property type="protein sequence ID" value="AAL91231.1"/>
    <property type="molecule type" value="mRNA"/>
</dbReference>
<dbReference type="EMBL" id="BT008838">
    <property type="protein sequence ID" value="AAP68277.1"/>
    <property type="molecule type" value="mRNA"/>
</dbReference>
<dbReference type="RefSeq" id="NP_196037.2">
    <property type="nucleotide sequence ID" value="NM_120499.4"/>
</dbReference>
<dbReference type="SMR" id="Q9FYE4"/>
<dbReference type="BioGRID" id="15575">
    <property type="interactions" value="2"/>
</dbReference>
<dbReference type="FunCoup" id="Q9FYE4">
    <property type="interactions" value="2003"/>
</dbReference>
<dbReference type="IntAct" id="Q9FYE4">
    <property type="interactions" value="3"/>
</dbReference>
<dbReference type="STRING" id="3702.Q9FYE4"/>
<dbReference type="GlyGen" id="Q9FYE4">
    <property type="glycosylation" value="1 site"/>
</dbReference>
<dbReference type="PaxDb" id="3702-AT5G04170.1"/>
<dbReference type="ProteomicsDB" id="241085"/>
<dbReference type="EnsemblPlants" id="AT5G04170.1">
    <property type="protein sequence ID" value="AT5G04170.1"/>
    <property type="gene ID" value="AT5G04170"/>
</dbReference>
<dbReference type="GeneID" id="830295"/>
<dbReference type="Gramene" id="AT5G04170.1">
    <property type="protein sequence ID" value="AT5G04170.1"/>
    <property type="gene ID" value="AT5G04170"/>
</dbReference>
<dbReference type="KEGG" id="ath:AT5G04170"/>
<dbReference type="Araport" id="AT5G04170"/>
<dbReference type="TAIR" id="AT5G04170"/>
<dbReference type="eggNOG" id="KOG0037">
    <property type="taxonomic scope" value="Eukaryota"/>
</dbReference>
<dbReference type="HOGENOM" id="CLU_051357_3_0_1"/>
<dbReference type="InParanoid" id="Q9FYE4"/>
<dbReference type="OMA" id="FTNSNAM"/>
<dbReference type="PhylomeDB" id="Q9FYE4"/>
<dbReference type="PRO" id="PR:Q9FYE4"/>
<dbReference type="Proteomes" id="UP000006548">
    <property type="component" value="Chromosome 5"/>
</dbReference>
<dbReference type="ExpressionAtlas" id="Q9FYE4">
    <property type="expression patterns" value="baseline and differential"/>
</dbReference>
<dbReference type="GO" id="GO:0005509">
    <property type="term" value="F:calcium ion binding"/>
    <property type="evidence" value="ECO:0007669"/>
    <property type="project" value="InterPro"/>
</dbReference>
<dbReference type="CDD" id="cd16180">
    <property type="entry name" value="EFh_PEF_Group_I"/>
    <property type="match status" value="1"/>
</dbReference>
<dbReference type="Gene3D" id="1.10.238.10">
    <property type="entry name" value="EF-hand"/>
    <property type="match status" value="1"/>
</dbReference>
<dbReference type="InterPro" id="IPR044590">
    <property type="entry name" value="CML48/49/50"/>
</dbReference>
<dbReference type="InterPro" id="IPR011992">
    <property type="entry name" value="EF-hand-dom_pair"/>
</dbReference>
<dbReference type="InterPro" id="IPR018247">
    <property type="entry name" value="EF_Hand_1_Ca_BS"/>
</dbReference>
<dbReference type="InterPro" id="IPR002048">
    <property type="entry name" value="EF_hand_dom"/>
</dbReference>
<dbReference type="PANTHER" id="PTHR46824">
    <property type="entry name" value="CALCIUM-BINDING PROTEIN CML48-RELATED"/>
    <property type="match status" value="1"/>
</dbReference>
<dbReference type="PANTHER" id="PTHR46824:SF5">
    <property type="entry name" value="CALCIUM-BINDING PROTEIN CML50-RELATED"/>
    <property type="match status" value="1"/>
</dbReference>
<dbReference type="Pfam" id="PF13202">
    <property type="entry name" value="EF-hand_5"/>
    <property type="match status" value="1"/>
</dbReference>
<dbReference type="Pfam" id="PF13499">
    <property type="entry name" value="EF-hand_7"/>
    <property type="match status" value="1"/>
</dbReference>
<dbReference type="SMART" id="SM00054">
    <property type="entry name" value="EFh"/>
    <property type="match status" value="2"/>
</dbReference>
<dbReference type="SUPFAM" id="SSF47473">
    <property type="entry name" value="EF-hand"/>
    <property type="match status" value="1"/>
</dbReference>
<dbReference type="PROSITE" id="PS00018">
    <property type="entry name" value="EF_HAND_1"/>
    <property type="match status" value="2"/>
</dbReference>
<dbReference type="PROSITE" id="PS50222">
    <property type="entry name" value="EF_HAND_2"/>
    <property type="match status" value="2"/>
</dbReference>
<organism>
    <name type="scientific">Arabidopsis thaliana</name>
    <name type="common">Mouse-ear cress</name>
    <dbReference type="NCBI Taxonomy" id="3702"/>
    <lineage>
        <taxon>Eukaryota</taxon>
        <taxon>Viridiplantae</taxon>
        <taxon>Streptophyta</taxon>
        <taxon>Embryophyta</taxon>
        <taxon>Tracheophyta</taxon>
        <taxon>Spermatophyta</taxon>
        <taxon>Magnoliopsida</taxon>
        <taxon>eudicotyledons</taxon>
        <taxon>Gunneridae</taxon>
        <taxon>Pentapetalae</taxon>
        <taxon>rosids</taxon>
        <taxon>malvids</taxon>
        <taxon>Brassicales</taxon>
        <taxon>Brassicaceae</taxon>
        <taxon>Camelineae</taxon>
        <taxon>Arabidopsis</taxon>
    </lineage>
</organism>
<proteinExistence type="evidence at transcript level"/>
<reference key="1">
    <citation type="journal article" date="2000" name="Nature">
        <title>Sequence and analysis of chromosome 5 of the plant Arabidopsis thaliana.</title>
        <authorList>
            <person name="Tabata S."/>
            <person name="Kaneko T."/>
            <person name="Nakamura Y."/>
            <person name="Kotani H."/>
            <person name="Kato T."/>
            <person name="Asamizu E."/>
            <person name="Miyajima N."/>
            <person name="Sasamoto S."/>
            <person name="Kimura T."/>
            <person name="Hosouchi T."/>
            <person name="Kawashima K."/>
            <person name="Kohara M."/>
            <person name="Matsumoto M."/>
            <person name="Matsuno A."/>
            <person name="Muraki A."/>
            <person name="Nakayama S."/>
            <person name="Nakazaki N."/>
            <person name="Naruo K."/>
            <person name="Okumura S."/>
            <person name="Shinpo S."/>
            <person name="Takeuchi C."/>
            <person name="Wada T."/>
            <person name="Watanabe A."/>
            <person name="Yamada M."/>
            <person name="Yasuda M."/>
            <person name="Sato S."/>
            <person name="de la Bastide M."/>
            <person name="Huang E."/>
            <person name="Spiegel L."/>
            <person name="Gnoj L."/>
            <person name="O'Shaughnessy A."/>
            <person name="Preston R."/>
            <person name="Habermann K."/>
            <person name="Murray J."/>
            <person name="Johnson D."/>
            <person name="Rohlfing T."/>
            <person name="Nelson J."/>
            <person name="Stoneking T."/>
            <person name="Pepin K."/>
            <person name="Spieth J."/>
            <person name="Sekhon M."/>
            <person name="Armstrong J."/>
            <person name="Becker M."/>
            <person name="Belter E."/>
            <person name="Cordum H."/>
            <person name="Cordes M."/>
            <person name="Courtney L."/>
            <person name="Courtney W."/>
            <person name="Dante M."/>
            <person name="Du H."/>
            <person name="Edwards J."/>
            <person name="Fryman J."/>
            <person name="Haakensen B."/>
            <person name="Lamar E."/>
            <person name="Latreille P."/>
            <person name="Leonard S."/>
            <person name="Meyer R."/>
            <person name="Mulvaney E."/>
            <person name="Ozersky P."/>
            <person name="Riley A."/>
            <person name="Strowmatt C."/>
            <person name="Wagner-McPherson C."/>
            <person name="Wollam A."/>
            <person name="Yoakum M."/>
            <person name="Bell M."/>
            <person name="Dedhia N."/>
            <person name="Parnell L."/>
            <person name="Shah R."/>
            <person name="Rodriguez M."/>
            <person name="Hoon See L."/>
            <person name="Vil D."/>
            <person name="Baker J."/>
            <person name="Kirchoff K."/>
            <person name="Toth K."/>
            <person name="King L."/>
            <person name="Bahret A."/>
            <person name="Miller B."/>
            <person name="Marra M.A."/>
            <person name="Martienssen R."/>
            <person name="McCombie W.R."/>
            <person name="Wilson R.K."/>
            <person name="Murphy G."/>
            <person name="Bancroft I."/>
            <person name="Volckaert G."/>
            <person name="Wambutt R."/>
            <person name="Duesterhoeft A."/>
            <person name="Stiekema W."/>
            <person name="Pohl T."/>
            <person name="Entian K.-D."/>
            <person name="Terryn N."/>
            <person name="Hartley N."/>
            <person name="Bent E."/>
            <person name="Johnson S."/>
            <person name="Langham S.-A."/>
            <person name="McCullagh B."/>
            <person name="Robben J."/>
            <person name="Grymonprez B."/>
            <person name="Zimmermann W."/>
            <person name="Ramsperger U."/>
            <person name="Wedler H."/>
            <person name="Balke K."/>
            <person name="Wedler E."/>
            <person name="Peters S."/>
            <person name="van Staveren M."/>
            <person name="Dirkse W."/>
            <person name="Mooijman P."/>
            <person name="Klein Lankhorst R."/>
            <person name="Weitzenegger T."/>
            <person name="Bothe G."/>
            <person name="Rose M."/>
            <person name="Hauf J."/>
            <person name="Berneiser S."/>
            <person name="Hempel S."/>
            <person name="Feldpausch M."/>
            <person name="Lamberth S."/>
            <person name="Villarroel R."/>
            <person name="Gielen J."/>
            <person name="Ardiles W."/>
            <person name="Bents O."/>
            <person name="Lemcke K."/>
            <person name="Kolesov G."/>
            <person name="Mayer K.F.X."/>
            <person name="Rudd S."/>
            <person name="Schoof H."/>
            <person name="Schueller C."/>
            <person name="Zaccaria P."/>
            <person name="Mewes H.-W."/>
            <person name="Bevan M."/>
            <person name="Fransz P.F."/>
        </authorList>
    </citation>
    <scope>NUCLEOTIDE SEQUENCE [LARGE SCALE GENOMIC DNA]</scope>
    <source>
        <strain>cv. Columbia</strain>
    </source>
</reference>
<reference key="2">
    <citation type="journal article" date="2017" name="Plant J.">
        <title>Araport11: a complete reannotation of the Arabidopsis thaliana reference genome.</title>
        <authorList>
            <person name="Cheng C.Y."/>
            <person name="Krishnakumar V."/>
            <person name="Chan A.P."/>
            <person name="Thibaud-Nissen F."/>
            <person name="Schobel S."/>
            <person name="Town C.D."/>
        </authorList>
    </citation>
    <scope>GENOME REANNOTATION</scope>
    <source>
        <strain>cv. Columbia</strain>
    </source>
</reference>
<reference key="3">
    <citation type="journal article" date="2003" name="Science">
        <title>Empirical analysis of transcriptional activity in the Arabidopsis genome.</title>
        <authorList>
            <person name="Yamada K."/>
            <person name="Lim J."/>
            <person name="Dale J.M."/>
            <person name="Chen H."/>
            <person name="Shinn P."/>
            <person name="Palm C.J."/>
            <person name="Southwick A.M."/>
            <person name="Wu H.C."/>
            <person name="Kim C.J."/>
            <person name="Nguyen M."/>
            <person name="Pham P.K."/>
            <person name="Cheuk R.F."/>
            <person name="Karlin-Newmann G."/>
            <person name="Liu S.X."/>
            <person name="Lam B."/>
            <person name="Sakano H."/>
            <person name="Wu T."/>
            <person name="Yu G."/>
            <person name="Miranda M."/>
            <person name="Quach H.L."/>
            <person name="Tripp M."/>
            <person name="Chang C.H."/>
            <person name="Lee J.M."/>
            <person name="Toriumi M.J."/>
            <person name="Chan M.M."/>
            <person name="Tang C.C."/>
            <person name="Onodera C.S."/>
            <person name="Deng J.M."/>
            <person name="Akiyama K."/>
            <person name="Ansari Y."/>
            <person name="Arakawa T."/>
            <person name="Banh J."/>
            <person name="Banno F."/>
            <person name="Bowser L."/>
            <person name="Brooks S.Y."/>
            <person name="Carninci P."/>
            <person name="Chao Q."/>
            <person name="Choy N."/>
            <person name="Enju A."/>
            <person name="Goldsmith A.D."/>
            <person name="Gurjal M."/>
            <person name="Hansen N.F."/>
            <person name="Hayashizaki Y."/>
            <person name="Johnson-Hopson C."/>
            <person name="Hsuan V.W."/>
            <person name="Iida K."/>
            <person name="Karnes M."/>
            <person name="Khan S."/>
            <person name="Koesema E."/>
            <person name="Ishida J."/>
            <person name="Jiang P.X."/>
            <person name="Jones T."/>
            <person name="Kawai J."/>
            <person name="Kamiya A."/>
            <person name="Meyers C."/>
            <person name="Nakajima M."/>
            <person name="Narusaka M."/>
            <person name="Seki M."/>
            <person name="Sakurai T."/>
            <person name="Satou M."/>
            <person name="Tamse R."/>
            <person name="Vaysberg M."/>
            <person name="Wallender E.K."/>
            <person name="Wong C."/>
            <person name="Yamamura Y."/>
            <person name="Yuan S."/>
            <person name="Shinozaki K."/>
            <person name="Davis R.W."/>
            <person name="Theologis A."/>
            <person name="Ecker J.R."/>
        </authorList>
    </citation>
    <scope>NUCLEOTIDE SEQUENCE [LARGE SCALE MRNA]</scope>
    <source>
        <strain>cv. Columbia</strain>
    </source>
</reference>
<reference key="4">
    <citation type="journal article" date="2003" name="New Phytol.">
        <title>Calmodulins and related potential calcium sensors of Arabidopsis.</title>
        <authorList>
            <person name="McCormack E."/>
            <person name="Braam J."/>
        </authorList>
    </citation>
    <scope>GENE FAMILY</scope>
    <scope>NOMENCLATURE</scope>
</reference>
<evidence type="ECO:0000250" key="1"/>
<evidence type="ECO:0000255" key="2">
    <source>
        <dbReference type="PROSITE-ProRule" id="PRU00448"/>
    </source>
</evidence>
<evidence type="ECO:0000256" key="3">
    <source>
        <dbReference type="SAM" id="MobiDB-lite"/>
    </source>
</evidence>
<evidence type="ECO:0000305" key="4"/>
<name>CML50_ARATH</name>
<sequence>MSGYPPTSQGYGYGYGGGNQPPPPQPPYSSGGNNPPYGSSTTSSPYAVPYGASKPQSSSSSAPTYGSSSYGAPPPSAPYAPSPGDYNKPPKEKPYGGGYGAPPPSGSSDYGSYGAGPRPSQPSGHGGGYGATPPHGVSDYGSYGGAPPRPASSGHGGGYGGYPPQASYGSPFASLIPSGFAPGTDPNIVACFQAADQDGSGFIDDKELQGALSSYQQRFSMRTVHLLMYLFTNSNAMKIGPKEFTALFYSLQNWRSIFERSDKDRSGRIDVNELRDALLSLGFSVSPVVLDLLVSKFDKSGGKNRAIEYDNFIECCLTVKGLTEKFKEKDTAYSGSATFNYESFMLTVLPFLIA</sequence>
<protein>
    <recommendedName>
        <fullName>Probable calcium-binding protein CML50</fullName>
    </recommendedName>
    <alternativeName>
        <fullName>Calmodulin-like protein 50</fullName>
    </alternativeName>
</protein>
<keyword id="KW-0106">Calcium</keyword>
<keyword id="KW-0479">Metal-binding</keyword>
<keyword id="KW-1185">Reference proteome</keyword>
<keyword id="KW-0677">Repeat</keyword>
<gene>
    <name type="primary">CML50</name>
    <name type="ordered locus">At5g04170</name>
    <name type="ORF">F21E1.90</name>
</gene>